<protein>
    <recommendedName>
        <fullName>Histidinol-phosphatase</fullName>
        <shortName>HolPase</shortName>
        <ecNumber>3.1.3.15</ecNumber>
    </recommendedName>
</protein>
<comment type="catalytic activity">
    <reaction>
        <text>L-histidinol phosphate + H2O = L-histidinol + phosphate</text>
        <dbReference type="Rhea" id="RHEA:14465"/>
        <dbReference type="ChEBI" id="CHEBI:15377"/>
        <dbReference type="ChEBI" id="CHEBI:43474"/>
        <dbReference type="ChEBI" id="CHEBI:57699"/>
        <dbReference type="ChEBI" id="CHEBI:57980"/>
        <dbReference type="EC" id="3.1.3.15"/>
    </reaction>
</comment>
<comment type="pathway">
    <text>Amino-acid biosynthesis; L-histidine biosynthesis; L-histidine from 5-phospho-alpha-D-ribose 1-diphosphate: step 8/9.</text>
</comment>
<comment type="similarity">
    <text evidence="1">Belongs to the PHP hydrolase family. HisK subfamily.</text>
</comment>
<evidence type="ECO:0000305" key="1"/>
<dbReference type="EC" id="3.1.3.15"/>
<dbReference type="EMBL" id="AF008220">
    <property type="protein sequence ID" value="AAC00399.1"/>
    <property type="molecule type" value="Genomic_DNA"/>
</dbReference>
<dbReference type="EMBL" id="AL009126">
    <property type="protein sequence ID" value="CAB14940.1"/>
    <property type="molecule type" value="Genomic_DNA"/>
</dbReference>
<dbReference type="PIR" id="D70002">
    <property type="entry name" value="D70002"/>
</dbReference>
<dbReference type="RefSeq" id="NP_390840.1">
    <property type="nucleotide sequence ID" value="NC_000964.3"/>
</dbReference>
<dbReference type="RefSeq" id="WP_003229318.1">
    <property type="nucleotide sequence ID" value="NZ_OZ025638.1"/>
</dbReference>
<dbReference type="SMR" id="O34411"/>
<dbReference type="FunCoup" id="O34411">
    <property type="interactions" value="220"/>
</dbReference>
<dbReference type="STRING" id="224308.BSU29620"/>
<dbReference type="PaxDb" id="224308-BSU29620"/>
<dbReference type="EnsemblBacteria" id="CAB14940">
    <property type="protein sequence ID" value="CAB14940"/>
    <property type="gene ID" value="BSU_29620"/>
</dbReference>
<dbReference type="GeneID" id="937924"/>
<dbReference type="KEGG" id="bsu:BSU29620"/>
<dbReference type="PATRIC" id="fig|224308.179.peg.3218"/>
<dbReference type="eggNOG" id="COG1387">
    <property type="taxonomic scope" value="Bacteria"/>
</dbReference>
<dbReference type="InParanoid" id="O34411"/>
<dbReference type="OrthoDB" id="9775255at2"/>
<dbReference type="PhylomeDB" id="O34411"/>
<dbReference type="BioCyc" id="BSUB:BSU29620-MONOMER"/>
<dbReference type="UniPathway" id="UPA00031">
    <property type="reaction ID" value="UER00013"/>
</dbReference>
<dbReference type="Proteomes" id="UP000001570">
    <property type="component" value="Chromosome"/>
</dbReference>
<dbReference type="GO" id="GO:0004401">
    <property type="term" value="F:histidinol-phosphatase activity"/>
    <property type="evidence" value="ECO:0000318"/>
    <property type="project" value="GO_Central"/>
</dbReference>
<dbReference type="GO" id="GO:0000105">
    <property type="term" value="P:L-histidine biosynthetic process"/>
    <property type="evidence" value="ECO:0000318"/>
    <property type="project" value="GO_Central"/>
</dbReference>
<dbReference type="CDD" id="cd12110">
    <property type="entry name" value="PHP_HisPPase_Hisj_like"/>
    <property type="match status" value="1"/>
</dbReference>
<dbReference type="Gene3D" id="3.20.20.140">
    <property type="entry name" value="Metal-dependent hydrolases"/>
    <property type="match status" value="1"/>
</dbReference>
<dbReference type="InterPro" id="IPR010140">
    <property type="entry name" value="Histidinol_P_phosphatase_HisJ"/>
</dbReference>
<dbReference type="InterPro" id="IPR004013">
    <property type="entry name" value="PHP_dom"/>
</dbReference>
<dbReference type="InterPro" id="IPR016195">
    <property type="entry name" value="Pol/histidinol_Pase-like"/>
</dbReference>
<dbReference type="NCBIfam" id="TIGR01856">
    <property type="entry name" value="hisJ_fam"/>
    <property type="match status" value="1"/>
</dbReference>
<dbReference type="NCBIfam" id="NF005996">
    <property type="entry name" value="PRK08123.1"/>
    <property type="match status" value="1"/>
</dbReference>
<dbReference type="PANTHER" id="PTHR21039">
    <property type="entry name" value="HISTIDINOL PHOSPHATASE-RELATED"/>
    <property type="match status" value="1"/>
</dbReference>
<dbReference type="PANTHER" id="PTHR21039:SF0">
    <property type="entry name" value="HISTIDINOL-PHOSPHATASE"/>
    <property type="match status" value="1"/>
</dbReference>
<dbReference type="Pfam" id="PF02811">
    <property type="entry name" value="PHP"/>
    <property type="match status" value="1"/>
</dbReference>
<dbReference type="Pfam" id="PF13263">
    <property type="entry name" value="PHP_C"/>
    <property type="match status" value="1"/>
</dbReference>
<dbReference type="SUPFAM" id="SSF89550">
    <property type="entry name" value="PHP domain-like"/>
    <property type="match status" value="1"/>
</dbReference>
<sequence length="268" mass="30476">MQKRDGHIHTPFCPHGSNDTLRQYAEEALKKGFESITFTEHAPLPPSFTDPTPLKDSAMAQASLERYIHEISGLKKEYRGQLSIRTGLEVDYIAEFEDEITLFLDTYGPYLDDSILSVHFLRTDSSYLCLDYDEHTFKELISACGSIEAVYEQYYRSIYSSIVASLGVYKPKRVGHITLVQKFIKLFPYSMSEHIRGLVSLCLNAIEENGMELDFNTSGLRKTYAGGIYIEDWMLNEAKQKKIPLVFGSDAHQAGDVGYAYEAFLERC</sequence>
<organism>
    <name type="scientific">Bacillus subtilis (strain 168)</name>
    <dbReference type="NCBI Taxonomy" id="224308"/>
    <lineage>
        <taxon>Bacteria</taxon>
        <taxon>Bacillati</taxon>
        <taxon>Bacillota</taxon>
        <taxon>Bacilli</taxon>
        <taxon>Bacillales</taxon>
        <taxon>Bacillaceae</taxon>
        <taxon>Bacillus</taxon>
    </lineage>
</organism>
<gene>
    <name type="primary">hisK</name>
    <name type="synonym">hisJ</name>
    <name type="ordered locus">BSU29620</name>
</gene>
<feature type="chain" id="PRO_0000122316" description="Histidinol-phosphatase">
    <location>
        <begin position="1"/>
        <end position="268"/>
    </location>
</feature>
<keyword id="KW-0028">Amino-acid biosynthesis</keyword>
<keyword id="KW-0368">Histidine biosynthesis</keyword>
<keyword id="KW-0378">Hydrolase</keyword>
<keyword id="KW-1185">Reference proteome</keyword>
<accession>O34411</accession>
<name>HIS9_BACSU</name>
<proteinExistence type="evidence at protein level"/>
<reference key="1">
    <citation type="journal article" date="1997" name="Microbiology">
        <title>Sequencing and functional annotation of the Bacillus subtilis genes in the 200 kb rrnB-dnaB region.</title>
        <authorList>
            <person name="Lapidus A."/>
            <person name="Galleron N."/>
            <person name="Sorokin A."/>
            <person name="Ehrlich S.D."/>
        </authorList>
    </citation>
    <scope>NUCLEOTIDE SEQUENCE [GENOMIC DNA]</scope>
    <source>
        <strain>168</strain>
    </source>
</reference>
<reference key="2">
    <citation type="journal article" date="1997" name="Nature">
        <title>The complete genome sequence of the Gram-positive bacterium Bacillus subtilis.</title>
        <authorList>
            <person name="Kunst F."/>
            <person name="Ogasawara N."/>
            <person name="Moszer I."/>
            <person name="Albertini A.M."/>
            <person name="Alloni G."/>
            <person name="Azevedo V."/>
            <person name="Bertero M.G."/>
            <person name="Bessieres P."/>
            <person name="Bolotin A."/>
            <person name="Borchert S."/>
            <person name="Borriss R."/>
            <person name="Boursier L."/>
            <person name="Brans A."/>
            <person name="Braun M."/>
            <person name="Brignell S.C."/>
            <person name="Bron S."/>
            <person name="Brouillet S."/>
            <person name="Bruschi C.V."/>
            <person name="Caldwell B."/>
            <person name="Capuano V."/>
            <person name="Carter N.M."/>
            <person name="Choi S.-K."/>
            <person name="Codani J.-J."/>
            <person name="Connerton I.F."/>
            <person name="Cummings N.J."/>
            <person name="Daniel R.A."/>
            <person name="Denizot F."/>
            <person name="Devine K.M."/>
            <person name="Duesterhoeft A."/>
            <person name="Ehrlich S.D."/>
            <person name="Emmerson P.T."/>
            <person name="Entian K.-D."/>
            <person name="Errington J."/>
            <person name="Fabret C."/>
            <person name="Ferrari E."/>
            <person name="Foulger D."/>
            <person name="Fritz C."/>
            <person name="Fujita M."/>
            <person name="Fujita Y."/>
            <person name="Fuma S."/>
            <person name="Galizzi A."/>
            <person name="Galleron N."/>
            <person name="Ghim S.-Y."/>
            <person name="Glaser P."/>
            <person name="Goffeau A."/>
            <person name="Golightly E.J."/>
            <person name="Grandi G."/>
            <person name="Guiseppi G."/>
            <person name="Guy B.J."/>
            <person name="Haga K."/>
            <person name="Haiech J."/>
            <person name="Harwood C.R."/>
            <person name="Henaut A."/>
            <person name="Hilbert H."/>
            <person name="Holsappel S."/>
            <person name="Hosono S."/>
            <person name="Hullo M.-F."/>
            <person name="Itaya M."/>
            <person name="Jones L.-M."/>
            <person name="Joris B."/>
            <person name="Karamata D."/>
            <person name="Kasahara Y."/>
            <person name="Klaerr-Blanchard M."/>
            <person name="Klein C."/>
            <person name="Kobayashi Y."/>
            <person name="Koetter P."/>
            <person name="Koningstein G."/>
            <person name="Krogh S."/>
            <person name="Kumano M."/>
            <person name="Kurita K."/>
            <person name="Lapidus A."/>
            <person name="Lardinois S."/>
            <person name="Lauber J."/>
            <person name="Lazarevic V."/>
            <person name="Lee S.-M."/>
            <person name="Levine A."/>
            <person name="Liu H."/>
            <person name="Masuda S."/>
            <person name="Mauel C."/>
            <person name="Medigue C."/>
            <person name="Medina N."/>
            <person name="Mellado R.P."/>
            <person name="Mizuno M."/>
            <person name="Moestl D."/>
            <person name="Nakai S."/>
            <person name="Noback M."/>
            <person name="Noone D."/>
            <person name="O'Reilly M."/>
            <person name="Ogawa K."/>
            <person name="Ogiwara A."/>
            <person name="Oudega B."/>
            <person name="Park S.-H."/>
            <person name="Parro V."/>
            <person name="Pohl T.M."/>
            <person name="Portetelle D."/>
            <person name="Porwollik S."/>
            <person name="Prescott A.M."/>
            <person name="Presecan E."/>
            <person name="Pujic P."/>
            <person name="Purnelle B."/>
            <person name="Rapoport G."/>
            <person name="Rey M."/>
            <person name="Reynolds S."/>
            <person name="Rieger M."/>
            <person name="Rivolta C."/>
            <person name="Rocha E."/>
            <person name="Roche B."/>
            <person name="Rose M."/>
            <person name="Sadaie Y."/>
            <person name="Sato T."/>
            <person name="Scanlan E."/>
            <person name="Schleich S."/>
            <person name="Schroeter R."/>
            <person name="Scoffone F."/>
            <person name="Sekiguchi J."/>
            <person name="Sekowska A."/>
            <person name="Seror S.J."/>
            <person name="Serror P."/>
            <person name="Shin B.-S."/>
            <person name="Soldo B."/>
            <person name="Sorokin A."/>
            <person name="Tacconi E."/>
            <person name="Takagi T."/>
            <person name="Takahashi H."/>
            <person name="Takemaru K."/>
            <person name="Takeuchi M."/>
            <person name="Tamakoshi A."/>
            <person name="Tanaka T."/>
            <person name="Terpstra P."/>
            <person name="Tognoni A."/>
            <person name="Tosato V."/>
            <person name="Uchiyama S."/>
            <person name="Vandenbol M."/>
            <person name="Vannier F."/>
            <person name="Vassarotti A."/>
            <person name="Viari A."/>
            <person name="Wambutt R."/>
            <person name="Wedler E."/>
            <person name="Wedler H."/>
            <person name="Weitzenegger T."/>
            <person name="Winters P."/>
            <person name="Wipat A."/>
            <person name="Yamamoto H."/>
            <person name="Yamane K."/>
            <person name="Yasumoto K."/>
            <person name="Yata K."/>
            <person name="Yoshida K."/>
            <person name="Yoshikawa H.-F."/>
            <person name="Zumstein E."/>
            <person name="Yoshikawa H."/>
            <person name="Danchin A."/>
        </authorList>
    </citation>
    <scope>NUCLEOTIDE SEQUENCE [LARGE SCALE GENOMIC DNA]</scope>
    <source>
        <strain>168</strain>
    </source>
</reference>
<reference key="3">
    <citation type="journal article" date="1999" name="J. Bacteriol.">
        <title>Histidinol phosphate phosphatase, catalyzing the penultimate step of the histidine biosynthesis pathway, is encoded by ytvP (hisJ) in Bacillus subtilis.</title>
        <authorList>
            <person name="Le Coq D."/>
            <person name="Fillinger S."/>
            <person name="Aymerich S."/>
        </authorList>
    </citation>
    <scope>CHARACTERIZATION</scope>
</reference>